<gene>
    <name type="primary">mhbI</name>
</gene>
<comment type="catalytic activity">
    <reaction>
        <text>3-maleylpyruvate = 3-fumarylpyruvate</text>
        <dbReference type="Rhea" id="RHEA:17393"/>
        <dbReference type="ChEBI" id="CHEBI:16727"/>
        <dbReference type="ChEBI" id="CHEBI:16854"/>
        <dbReference type="EC" id="5.2.1.4"/>
    </reaction>
</comment>
<organism>
    <name type="scientific">Klebsiella pneumoniae</name>
    <dbReference type="NCBI Taxonomy" id="573"/>
    <lineage>
        <taxon>Bacteria</taxon>
        <taxon>Pseudomonadati</taxon>
        <taxon>Pseudomonadota</taxon>
        <taxon>Gammaproteobacteria</taxon>
        <taxon>Enterobacterales</taxon>
        <taxon>Enterobacteriaceae</taxon>
        <taxon>Klebsiella/Raoultella group</taxon>
        <taxon>Klebsiella</taxon>
        <taxon>Klebsiella pneumoniae complex</taxon>
    </lineage>
</organism>
<feature type="chain" id="PRO_0000096468" description="Maleylpyruvate isomerase">
    <location>
        <begin position="1"/>
        <end position="11" status="greater than"/>
    </location>
</feature>
<feature type="non-terminal residue">
    <location>
        <position position="11"/>
    </location>
</feature>
<dbReference type="EC" id="5.2.1.4"/>
<dbReference type="GO" id="GO:0050077">
    <property type="term" value="F:maleylpyruvate isomerase activity"/>
    <property type="evidence" value="ECO:0007669"/>
    <property type="project" value="UniProtKB-EC"/>
</dbReference>
<protein>
    <recommendedName>
        <fullName>Maleylpyruvate isomerase</fullName>
        <ecNumber>5.2.1.4</ecNumber>
    </recommendedName>
</protein>
<name>MHBI_KLEPN</name>
<keyword id="KW-0903">Direct protein sequencing</keyword>
<keyword id="KW-0413">Isomerase</keyword>
<accession>P80580</accession>
<reference key="1">
    <citation type="journal article" date="1996" name="Microbiology">
        <title>In vitro formation of a catabolic plasmid carrying Klebsiella pneumoniae DNA that allows growth of Escherichia coli K-12 on 3-hydroxybenzoate.</title>
        <authorList>
            <person name="Robson N.D."/>
            <person name="Parrott S."/>
            <person name="Cooper R.A."/>
        </authorList>
    </citation>
    <scope>PROTEIN SEQUENCE</scope>
</reference>
<sequence length="11" mass="1388">MKLYSFFNXRA</sequence>
<proteinExistence type="evidence at protein level"/>